<feature type="chain" id="PRO_0000240035" description="NAD(P)H-quinone oxidoreductase subunit 1">
    <location>
        <begin position="1"/>
        <end position="372"/>
    </location>
</feature>
<feature type="transmembrane region" description="Helical" evidence="1">
    <location>
        <begin position="27"/>
        <end position="47"/>
    </location>
</feature>
<feature type="transmembrane region" description="Helical" evidence="1">
    <location>
        <begin position="65"/>
        <end position="85"/>
    </location>
</feature>
<feature type="transmembrane region" description="Helical" evidence="1">
    <location>
        <begin position="97"/>
        <end position="117"/>
    </location>
</feature>
<feature type="transmembrane region" description="Helical" evidence="1">
    <location>
        <begin position="128"/>
        <end position="148"/>
    </location>
</feature>
<feature type="transmembrane region" description="Helical" evidence="1">
    <location>
        <begin position="166"/>
        <end position="186"/>
    </location>
</feature>
<feature type="transmembrane region" description="Helical" evidence="1">
    <location>
        <begin position="204"/>
        <end position="224"/>
    </location>
</feature>
<feature type="transmembrane region" description="Helical" evidence="1">
    <location>
        <begin position="266"/>
        <end position="286"/>
    </location>
</feature>
<feature type="transmembrane region" description="Helical" evidence="1">
    <location>
        <begin position="308"/>
        <end position="328"/>
    </location>
</feature>
<feature type="transmembrane region" description="Helical" evidence="1">
    <location>
        <begin position="347"/>
        <end position="367"/>
    </location>
</feature>
<protein>
    <recommendedName>
        <fullName evidence="1">NAD(P)H-quinone oxidoreductase subunit 1</fullName>
        <ecNumber evidence="1">7.1.1.-</ecNumber>
    </recommendedName>
    <alternativeName>
        <fullName evidence="1">NAD(P)H dehydrogenase I subunit 1</fullName>
    </alternativeName>
    <alternativeName>
        <fullName evidence="1">NDH-1 subunit 1</fullName>
    </alternativeName>
    <alternativeName>
        <fullName evidence="1">NDH-A</fullName>
    </alternativeName>
</protein>
<evidence type="ECO:0000255" key="1">
    <source>
        <dbReference type="HAMAP-Rule" id="MF_01350"/>
    </source>
</evidence>
<gene>
    <name evidence="1" type="primary">ndhA</name>
    <name type="ordered locus">Ava_2714</name>
</gene>
<dbReference type="EC" id="7.1.1.-" evidence="1"/>
<dbReference type="EMBL" id="CP000117">
    <property type="protein sequence ID" value="ABA22327.1"/>
    <property type="molecule type" value="Genomic_DNA"/>
</dbReference>
<dbReference type="SMR" id="Q3M9K9"/>
<dbReference type="STRING" id="240292.Ava_2714"/>
<dbReference type="KEGG" id="ava:Ava_2714"/>
<dbReference type="eggNOG" id="COG1005">
    <property type="taxonomic scope" value="Bacteria"/>
</dbReference>
<dbReference type="HOGENOM" id="CLU_015134_0_1_3"/>
<dbReference type="Proteomes" id="UP000002533">
    <property type="component" value="Chromosome"/>
</dbReference>
<dbReference type="GO" id="GO:0031676">
    <property type="term" value="C:plasma membrane-derived thylakoid membrane"/>
    <property type="evidence" value="ECO:0007669"/>
    <property type="project" value="UniProtKB-SubCell"/>
</dbReference>
<dbReference type="GO" id="GO:0003954">
    <property type="term" value="F:NADH dehydrogenase activity"/>
    <property type="evidence" value="ECO:0007669"/>
    <property type="project" value="TreeGrafter"/>
</dbReference>
<dbReference type="GO" id="GO:0016655">
    <property type="term" value="F:oxidoreductase activity, acting on NAD(P)H, quinone or similar compound as acceptor"/>
    <property type="evidence" value="ECO:0007669"/>
    <property type="project" value="UniProtKB-UniRule"/>
</dbReference>
<dbReference type="GO" id="GO:0048038">
    <property type="term" value="F:quinone binding"/>
    <property type="evidence" value="ECO:0007669"/>
    <property type="project" value="UniProtKB-KW"/>
</dbReference>
<dbReference type="GO" id="GO:0009060">
    <property type="term" value="P:aerobic respiration"/>
    <property type="evidence" value="ECO:0007669"/>
    <property type="project" value="TreeGrafter"/>
</dbReference>
<dbReference type="GO" id="GO:0019684">
    <property type="term" value="P:photosynthesis, light reaction"/>
    <property type="evidence" value="ECO:0007669"/>
    <property type="project" value="UniProtKB-UniRule"/>
</dbReference>
<dbReference type="HAMAP" id="MF_01350">
    <property type="entry name" value="NDH1_NuoH"/>
    <property type="match status" value="1"/>
</dbReference>
<dbReference type="InterPro" id="IPR001694">
    <property type="entry name" value="NADH_UbQ_OxRdtase_su1/FPO"/>
</dbReference>
<dbReference type="InterPro" id="IPR018086">
    <property type="entry name" value="NADH_UbQ_OxRdtase_su1_CS"/>
</dbReference>
<dbReference type="NCBIfam" id="NF004741">
    <property type="entry name" value="PRK06076.1-2"/>
    <property type="match status" value="1"/>
</dbReference>
<dbReference type="NCBIfam" id="NF004744">
    <property type="entry name" value="PRK06076.1-5"/>
    <property type="match status" value="1"/>
</dbReference>
<dbReference type="PANTHER" id="PTHR11432">
    <property type="entry name" value="NADH DEHYDROGENASE SUBUNIT 1"/>
    <property type="match status" value="1"/>
</dbReference>
<dbReference type="PANTHER" id="PTHR11432:SF3">
    <property type="entry name" value="NADH-UBIQUINONE OXIDOREDUCTASE CHAIN 1"/>
    <property type="match status" value="1"/>
</dbReference>
<dbReference type="Pfam" id="PF00146">
    <property type="entry name" value="NADHdh"/>
    <property type="match status" value="1"/>
</dbReference>
<dbReference type="PROSITE" id="PS00667">
    <property type="entry name" value="COMPLEX1_ND1_1"/>
    <property type="match status" value="1"/>
</dbReference>
<dbReference type="PROSITE" id="PS00668">
    <property type="entry name" value="COMPLEX1_ND1_2"/>
    <property type="match status" value="1"/>
</dbReference>
<comment type="function">
    <text evidence="1">NDH-1 shuttles electrons from an unknown electron donor, via FMN and iron-sulfur (Fe-S) centers, to quinones in the respiratory and/or the photosynthetic chain. The immediate electron acceptor for the enzyme in this species is believed to be plastoquinone. Couples the redox reaction to proton translocation, and thus conserves the redox energy in a proton gradient.</text>
</comment>
<comment type="catalytic activity">
    <reaction evidence="1">
        <text>a plastoquinone + NADH + (n+1) H(+)(in) = a plastoquinol + NAD(+) + n H(+)(out)</text>
        <dbReference type="Rhea" id="RHEA:42608"/>
        <dbReference type="Rhea" id="RHEA-COMP:9561"/>
        <dbReference type="Rhea" id="RHEA-COMP:9562"/>
        <dbReference type="ChEBI" id="CHEBI:15378"/>
        <dbReference type="ChEBI" id="CHEBI:17757"/>
        <dbReference type="ChEBI" id="CHEBI:57540"/>
        <dbReference type="ChEBI" id="CHEBI:57945"/>
        <dbReference type="ChEBI" id="CHEBI:62192"/>
    </reaction>
</comment>
<comment type="catalytic activity">
    <reaction evidence="1">
        <text>a plastoquinone + NADPH + (n+1) H(+)(in) = a plastoquinol + NADP(+) + n H(+)(out)</text>
        <dbReference type="Rhea" id="RHEA:42612"/>
        <dbReference type="Rhea" id="RHEA-COMP:9561"/>
        <dbReference type="Rhea" id="RHEA-COMP:9562"/>
        <dbReference type="ChEBI" id="CHEBI:15378"/>
        <dbReference type="ChEBI" id="CHEBI:17757"/>
        <dbReference type="ChEBI" id="CHEBI:57783"/>
        <dbReference type="ChEBI" id="CHEBI:58349"/>
        <dbReference type="ChEBI" id="CHEBI:62192"/>
    </reaction>
</comment>
<comment type="subunit">
    <text evidence="1">NDH-1 is composed of at least 11 different subunits.</text>
</comment>
<comment type="subcellular location">
    <subcellularLocation>
        <location evidence="1">Cellular thylakoid membrane</location>
        <topology evidence="1">Multi-pass membrane protein</topology>
    </subcellularLocation>
</comment>
<comment type="similarity">
    <text evidence="1">Belongs to the complex I subunit 1 family.</text>
</comment>
<accession>Q3M9K9</accession>
<proteinExistence type="inferred from homology"/>
<name>NU1C_TRIV2</name>
<keyword id="KW-0472">Membrane</keyword>
<keyword id="KW-0520">NAD</keyword>
<keyword id="KW-0521">NADP</keyword>
<keyword id="KW-0618">Plastoquinone</keyword>
<keyword id="KW-0874">Quinone</keyword>
<keyword id="KW-0793">Thylakoid</keyword>
<keyword id="KW-1278">Translocase</keyword>
<keyword id="KW-0812">Transmembrane</keyword>
<keyword id="KW-1133">Transmembrane helix</keyword>
<organism>
    <name type="scientific">Trichormus variabilis (strain ATCC 29413 / PCC 7937)</name>
    <name type="common">Anabaena variabilis</name>
    <dbReference type="NCBI Taxonomy" id="240292"/>
    <lineage>
        <taxon>Bacteria</taxon>
        <taxon>Bacillati</taxon>
        <taxon>Cyanobacteriota</taxon>
        <taxon>Cyanophyceae</taxon>
        <taxon>Nostocales</taxon>
        <taxon>Nostocaceae</taxon>
        <taxon>Trichormus</taxon>
    </lineage>
</organism>
<sequence>MNSGIDLQGTFIKSLMDLGIPPGTAKAIWMPLPMILMLIGATVGVLVCVWLERKISAAAQQRIGPEYIGPLGLLAPVADGLKLVFKEDIVPAQADPWLFTLGPILVVLPVFLSYLIVPFGQNIVITNIGTGIFLWIALSSIQPIGLLMAGYSSNNKYSLLGGLRAAAQSISYEIPLALSVLAIVMMSNSLSTVDIVNQQSGYGILGWNIWRQPLGFLIFWIAALAECERLPFDLPEAEEELVAGYQTEYSGMKFALFYLSSYVNLVLSALLVAVLYLGGWDFPIPINVLANLVGVSEANPVLQVVSAALGITMTLVKAYFLVFIAILLRWTVPRVRIDQLLDLGWKFLLPVGLVNLLLTAALKLAFPVAFGG</sequence>
<reference key="1">
    <citation type="journal article" date="2014" name="Stand. Genomic Sci.">
        <title>Complete genome sequence of Anabaena variabilis ATCC 29413.</title>
        <authorList>
            <person name="Thiel T."/>
            <person name="Pratte B.S."/>
            <person name="Zhong J."/>
            <person name="Goodwin L."/>
            <person name="Copeland A."/>
            <person name="Lucas S."/>
            <person name="Han C."/>
            <person name="Pitluck S."/>
            <person name="Land M.L."/>
            <person name="Kyrpides N.C."/>
            <person name="Woyke T."/>
        </authorList>
    </citation>
    <scope>NUCLEOTIDE SEQUENCE [LARGE SCALE GENOMIC DNA]</scope>
    <source>
        <strain>ATCC 29413 / PCC 7937</strain>
    </source>
</reference>